<comment type="function">
    <text>May have an important physiological role in neuroregulation.</text>
</comment>
<comment type="subcellular location">
    <subcellularLocation>
        <location>Secreted</location>
    </subcellularLocation>
</comment>
<comment type="tissue specificity">
    <text>Neuronal somata and fibers.</text>
</comment>
<comment type="similarity">
    <text evidence="2">Belongs to the NPY family.</text>
</comment>
<protein>
    <recommendedName>
        <fullName>Neuropeptide F</fullName>
        <shortName>NPF</shortName>
    </recommendedName>
</protein>
<feature type="peptide" id="PRO_0000044824" description="Neuropeptide F">
    <location>
        <begin position="1"/>
        <end position="39"/>
    </location>
</feature>
<feature type="modified residue" description="Phenylalanine amide" evidence="1">
    <location>
        <position position="39"/>
    </location>
</feature>
<accession>P41321</accession>
<keyword id="KW-0027">Amidation</keyword>
<keyword id="KW-0903">Direct protein sequencing</keyword>
<keyword id="KW-0527">Neuropeptide</keyword>
<keyword id="KW-0964">Secreted</keyword>
<dbReference type="PIR" id="A48544">
    <property type="entry name" value="A48544"/>
</dbReference>
<dbReference type="SMR" id="P41321"/>
<dbReference type="GO" id="GO:0005576">
    <property type="term" value="C:extracellular region"/>
    <property type="evidence" value="ECO:0007669"/>
    <property type="project" value="UniProtKB-SubCell"/>
</dbReference>
<dbReference type="GO" id="GO:0005179">
    <property type="term" value="F:hormone activity"/>
    <property type="evidence" value="ECO:0007669"/>
    <property type="project" value="InterPro"/>
</dbReference>
<dbReference type="GO" id="GO:0007218">
    <property type="term" value="P:neuropeptide signaling pathway"/>
    <property type="evidence" value="ECO:0007669"/>
    <property type="project" value="UniProtKB-KW"/>
</dbReference>
<dbReference type="CDD" id="cd00126">
    <property type="entry name" value="PAH"/>
    <property type="match status" value="1"/>
</dbReference>
<dbReference type="InterPro" id="IPR001955">
    <property type="entry name" value="Pancreatic_hormone-like"/>
</dbReference>
<dbReference type="InterPro" id="IPR020392">
    <property type="entry name" value="Pancreatic_hormone-like_CS"/>
</dbReference>
<dbReference type="Pfam" id="PF00159">
    <property type="entry name" value="Hormone_3"/>
    <property type="match status" value="1"/>
</dbReference>
<dbReference type="SMART" id="SM00309">
    <property type="entry name" value="PAH"/>
    <property type="match status" value="1"/>
</dbReference>
<dbReference type="PROSITE" id="PS00265">
    <property type="entry name" value="PANCREATIC_HORMONE_1"/>
    <property type="match status" value="1"/>
</dbReference>
<dbReference type="PROSITE" id="PS50276">
    <property type="entry name" value="PANCREATIC_HORMONE_2"/>
    <property type="match status" value="1"/>
</dbReference>
<proteinExistence type="evidence at protein level"/>
<organism>
    <name type="scientific">Cornu aspersum</name>
    <name type="common">Brown garden snail</name>
    <name type="synonym">Helix aspersa</name>
    <dbReference type="NCBI Taxonomy" id="6535"/>
    <lineage>
        <taxon>Eukaryota</taxon>
        <taxon>Metazoa</taxon>
        <taxon>Spiralia</taxon>
        <taxon>Lophotrochozoa</taxon>
        <taxon>Mollusca</taxon>
        <taxon>Gastropoda</taxon>
        <taxon>Heterobranchia</taxon>
        <taxon>Euthyneura</taxon>
        <taxon>Panpulmonata</taxon>
        <taxon>Eupulmonata</taxon>
        <taxon>Stylommatophora</taxon>
        <taxon>Helicina</taxon>
        <taxon>Helicoidea</taxon>
        <taxon>Helicidae</taxon>
        <taxon>Cornu</taxon>
        <taxon>Cornu</taxon>
    </lineage>
</organism>
<sequence length="39" mass="4856">STQMLSPPERPREFRHPNELRQYLKELNEYYAIMGRTRF</sequence>
<evidence type="ECO:0000269" key="1">
    <source>
    </source>
</evidence>
<evidence type="ECO:0000305" key="2"/>
<name>NPF_CORAP</name>
<reference key="1">
    <citation type="journal article" date="1992" name="Regul. Pept.">
        <title>The primary structure of neuropeptide F (NPF) from the garden snail, Helix aspersa.</title>
        <authorList>
            <person name="Leung P.S."/>
            <person name="Shaw C."/>
            <person name="Maule A.G."/>
            <person name="Thim L."/>
            <person name="Johnston C.F."/>
            <person name="Irvine G.B."/>
        </authorList>
    </citation>
    <scope>PROTEIN SEQUENCE</scope>
    <scope>AMIDATION AT PHE-39</scope>
    <source>
        <tissue>Circumesophageal ganglion</tissue>
    </source>
</reference>